<reference key="1">
    <citation type="journal article" date="2011" name="MBio">
        <title>Novel metabolic attributes of the genus Cyanothece, comprising a group of unicellular nitrogen-fixing Cyanobacteria.</title>
        <authorList>
            <person name="Bandyopadhyay A."/>
            <person name="Elvitigala T."/>
            <person name="Welsh E."/>
            <person name="Stockel J."/>
            <person name="Liberton M."/>
            <person name="Min H."/>
            <person name="Sherman L.A."/>
            <person name="Pakrasi H.B."/>
        </authorList>
    </citation>
    <scope>NUCLEOTIDE SEQUENCE [LARGE SCALE GENOMIC DNA]</scope>
    <source>
        <strain>PCC 8801 / RF-1</strain>
    </source>
</reference>
<keyword id="KW-0240">DNA-directed RNA polymerase</keyword>
<keyword id="KW-0460">Magnesium</keyword>
<keyword id="KW-0479">Metal-binding</keyword>
<keyword id="KW-0548">Nucleotidyltransferase</keyword>
<keyword id="KW-1185">Reference proteome</keyword>
<keyword id="KW-0804">Transcription</keyword>
<keyword id="KW-0808">Transferase</keyword>
<keyword id="KW-0862">Zinc</keyword>
<protein>
    <recommendedName>
        <fullName evidence="1">DNA-directed RNA polymerase subunit gamma</fullName>
        <shortName evidence="1">RNAP subunit gamma</shortName>
        <ecNumber evidence="1">2.7.7.6</ecNumber>
    </recommendedName>
    <alternativeName>
        <fullName evidence="1">RNA polymerase subunit gamma</fullName>
    </alternativeName>
    <alternativeName>
        <fullName evidence="1">Transcriptase subunit gamma</fullName>
    </alternativeName>
</protein>
<name>RPOC1_RIPO1</name>
<feature type="chain" id="PRO_1000141804" description="DNA-directed RNA polymerase subunit gamma">
    <location>
        <begin position="1"/>
        <end position="625"/>
    </location>
</feature>
<feature type="binding site" evidence="1">
    <location>
        <position position="71"/>
    </location>
    <ligand>
        <name>Zn(2+)</name>
        <dbReference type="ChEBI" id="CHEBI:29105"/>
    </ligand>
</feature>
<feature type="binding site" evidence="1">
    <location>
        <position position="73"/>
    </location>
    <ligand>
        <name>Zn(2+)</name>
        <dbReference type="ChEBI" id="CHEBI:29105"/>
    </ligand>
</feature>
<feature type="binding site" evidence="1">
    <location>
        <position position="86"/>
    </location>
    <ligand>
        <name>Zn(2+)</name>
        <dbReference type="ChEBI" id="CHEBI:29105"/>
    </ligand>
</feature>
<feature type="binding site" evidence="1">
    <location>
        <position position="89"/>
    </location>
    <ligand>
        <name>Zn(2+)</name>
        <dbReference type="ChEBI" id="CHEBI:29105"/>
    </ligand>
</feature>
<feature type="binding site" evidence="1">
    <location>
        <position position="467"/>
    </location>
    <ligand>
        <name>Mg(2+)</name>
        <dbReference type="ChEBI" id="CHEBI:18420"/>
    </ligand>
</feature>
<feature type="binding site" evidence="1">
    <location>
        <position position="469"/>
    </location>
    <ligand>
        <name>Mg(2+)</name>
        <dbReference type="ChEBI" id="CHEBI:18420"/>
    </ligand>
</feature>
<feature type="binding site" evidence="1">
    <location>
        <position position="471"/>
    </location>
    <ligand>
        <name>Mg(2+)</name>
        <dbReference type="ChEBI" id="CHEBI:18420"/>
    </ligand>
</feature>
<comment type="function">
    <text evidence="1">DNA-dependent RNA polymerase catalyzes the transcription of DNA into RNA using the four ribonucleoside triphosphates as substrates.</text>
</comment>
<comment type="catalytic activity">
    <reaction evidence="1">
        <text>RNA(n) + a ribonucleoside 5'-triphosphate = RNA(n+1) + diphosphate</text>
        <dbReference type="Rhea" id="RHEA:21248"/>
        <dbReference type="Rhea" id="RHEA-COMP:14527"/>
        <dbReference type="Rhea" id="RHEA-COMP:17342"/>
        <dbReference type="ChEBI" id="CHEBI:33019"/>
        <dbReference type="ChEBI" id="CHEBI:61557"/>
        <dbReference type="ChEBI" id="CHEBI:140395"/>
        <dbReference type="EC" id="2.7.7.6"/>
    </reaction>
</comment>
<comment type="cofactor">
    <cofactor evidence="1">
        <name>Mg(2+)</name>
        <dbReference type="ChEBI" id="CHEBI:18420"/>
    </cofactor>
    <text evidence="1">Binds 1 Mg(2+) ion per subunit.</text>
</comment>
<comment type="cofactor">
    <cofactor evidence="1">
        <name>Zn(2+)</name>
        <dbReference type="ChEBI" id="CHEBI:29105"/>
    </cofactor>
    <text evidence="1">Binds 1 Zn(2+) ion per subunit.</text>
</comment>
<comment type="subunit">
    <text evidence="1">In cyanobacteria the RNAP catalytic core is composed of 2 alpha, 1 beta, 1 beta', 1 gamma and 1 omega subunit. When a sigma factor is associated with the core the holoenzyme is formed, which can initiate transcription.</text>
</comment>
<comment type="similarity">
    <text evidence="1">Belongs to the RNA polymerase beta' chain family. RpoC1 subfamily.</text>
</comment>
<organism>
    <name type="scientific">Rippkaea orientalis (strain PCC 8801 / RF-1)</name>
    <name type="common">Cyanothece sp. (strain PCC 8801)</name>
    <dbReference type="NCBI Taxonomy" id="41431"/>
    <lineage>
        <taxon>Bacteria</taxon>
        <taxon>Bacillati</taxon>
        <taxon>Cyanobacteriota</taxon>
        <taxon>Cyanophyceae</taxon>
        <taxon>Oscillatoriophycideae</taxon>
        <taxon>Chroococcales</taxon>
        <taxon>Aphanothecaceae</taxon>
        <taxon>Rippkaea</taxon>
        <taxon>Rippkaea orientalis</taxon>
    </lineage>
</organism>
<sequence length="625" mass="71113">MKAQADSRFDYVKINLASPERIRQWGERSLPNGVVVGEVTKPETINYRTLKPEMDGLFCERIFGPSKDWECWCGKYKRVRHRGIVCERCGVEVTESRVRRHRMGFIKLAAPVTHVWYLKGIPSYLSILLDMALRDVEQIVYFNSYVVLDPGNASNLSYKQLLTEDQWIEIEEQIYAEDSELYGIEVGIGAEAIQRLLQEINLEEVAEKLREEILESKGQKRAKLIKRLRVIDNFVATNSRPDWMVLSVIPVIPPDLRPMVQLDGGRFATSDLNDLYRRVINRNNRLSRLQEILAPEIIVRNEKRMLQEAVDALIDNGRRGRTVVGANNRALKSLSDIIEGKQGRFRQNLLGKRVDYSGRSVIVVGPKLKIYQCGLPREMAIELFQPFVIHRLIRLGLVNNIKAAKKLIMREDPSVWTVLEEVITGHPVLLNRAPTLHRLGIQAFEPILVEGRAIQLHPLVCPAFNADFDGDQMAVHVPLSLEAQSEARLLMLACHNILSPATGKPIVAPSQDMVLGCYYLTAENPKAQKGANRYFGSIPDAIKAYEQGTVDLHAYVWLRYNGDVVTHKPDTEVLKTETLDDGSVIKHYRERRVREKDGEVISQFIRTTPGRIIYNKTIEDALVAL</sequence>
<dbReference type="EC" id="2.7.7.6" evidence="1"/>
<dbReference type="EMBL" id="CP001287">
    <property type="protein sequence ID" value="ACK64704.1"/>
    <property type="molecule type" value="Genomic_DNA"/>
</dbReference>
<dbReference type="RefSeq" id="WP_012593981.1">
    <property type="nucleotide sequence ID" value="NC_011726.1"/>
</dbReference>
<dbReference type="SMR" id="B7JWQ8"/>
<dbReference type="STRING" id="41431.PCC8801_0616"/>
<dbReference type="KEGG" id="cyp:PCC8801_0616"/>
<dbReference type="eggNOG" id="COG0086">
    <property type="taxonomic scope" value="Bacteria"/>
</dbReference>
<dbReference type="HOGENOM" id="CLU_030022_2_0_3"/>
<dbReference type="OrthoDB" id="9815296at2"/>
<dbReference type="Proteomes" id="UP000008204">
    <property type="component" value="Chromosome"/>
</dbReference>
<dbReference type="GO" id="GO:0000428">
    <property type="term" value="C:DNA-directed RNA polymerase complex"/>
    <property type="evidence" value="ECO:0007669"/>
    <property type="project" value="UniProtKB-KW"/>
</dbReference>
<dbReference type="GO" id="GO:0003677">
    <property type="term" value="F:DNA binding"/>
    <property type="evidence" value="ECO:0007669"/>
    <property type="project" value="UniProtKB-UniRule"/>
</dbReference>
<dbReference type="GO" id="GO:0003899">
    <property type="term" value="F:DNA-directed RNA polymerase activity"/>
    <property type="evidence" value="ECO:0007669"/>
    <property type="project" value="UniProtKB-UniRule"/>
</dbReference>
<dbReference type="GO" id="GO:0000287">
    <property type="term" value="F:magnesium ion binding"/>
    <property type="evidence" value="ECO:0007669"/>
    <property type="project" value="UniProtKB-UniRule"/>
</dbReference>
<dbReference type="GO" id="GO:0008270">
    <property type="term" value="F:zinc ion binding"/>
    <property type="evidence" value="ECO:0007669"/>
    <property type="project" value="UniProtKB-UniRule"/>
</dbReference>
<dbReference type="GO" id="GO:0006351">
    <property type="term" value="P:DNA-templated transcription"/>
    <property type="evidence" value="ECO:0007669"/>
    <property type="project" value="UniProtKB-UniRule"/>
</dbReference>
<dbReference type="Gene3D" id="1.10.40.90">
    <property type="match status" value="1"/>
</dbReference>
<dbReference type="Gene3D" id="2.40.40.20">
    <property type="match status" value="1"/>
</dbReference>
<dbReference type="Gene3D" id="4.10.860.120">
    <property type="entry name" value="RNA polymerase II, clamp domain"/>
    <property type="match status" value="1"/>
</dbReference>
<dbReference type="Gene3D" id="1.10.274.100">
    <property type="entry name" value="RNA polymerase Rpb1, domain 3"/>
    <property type="match status" value="1"/>
</dbReference>
<dbReference type="HAMAP" id="MF_01323">
    <property type="entry name" value="RNApol_bact_RpoC1"/>
    <property type="match status" value="1"/>
</dbReference>
<dbReference type="InterPro" id="IPR012755">
    <property type="entry name" value="DNA-dir_RpoC1_gamma"/>
</dbReference>
<dbReference type="InterPro" id="IPR045867">
    <property type="entry name" value="DNA-dir_RpoC_beta_prime"/>
</dbReference>
<dbReference type="InterPro" id="IPR000722">
    <property type="entry name" value="RNA_pol_asu"/>
</dbReference>
<dbReference type="InterPro" id="IPR006592">
    <property type="entry name" value="RNA_pol_N"/>
</dbReference>
<dbReference type="InterPro" id="IPR007080">
    <property type="entry name" value="RNA_pol_Rpb1_1"/>
</dbReference>
<dbReference type="InterPro" id="IPR007066">
    <property type="entry name" value="RNA_pol_Rpb1_3"/>
</dbReference>
<dbReference type="InterPro" id="IPR042102">
    <property type="entry name" value="RNA_pol_Rpb1_3_sf"/>
</dbReference>
<dbReference type="InterPro" id="IPR044893">
    <property type="entry name" value="RNA_pol_Rpb1_clamp_domain"/>
</dbReference>
<dbReference type="InterPro" id="IPR034678">
    <property type="entry name" value="RNApol_RpoC1"/>
</dbReference>
<dbReference type="NCBIfam" id="NF002729">
    <property type="entry name" value="PRK02625.1"/>
    <property type="match status" value="1"/>
</dbReference>
<dbReference type="NCBIfam" id="TIGR02387">
    <property type="entry name" value="rpoC1_cyan"/>
    <property type="match status" value="1"/>
</dbReference>
<dbReference type="PANTHER" id="PTHR19376">
    <property type="entry name" value="DNA-DIRECTED RNA POLYMERASE"/>
    <property type="match status" value="1"/>
</dbReference>
<dbReference type="PANTHER" id="PTHR19376:SF54">
    <property type="entry name" value="DNA-DIRECTED RNA POLYMERASE SUBUNIT BETA"/>
    <property type="match status" value="1"/>
</dbReference>
<dbReference type="Pfam" id="PF04997">
    <property type="entry name" value="RNA_pol_Rpb1_1"/>
    <property type="match status" value="1"/>
</dbReference>
<dbReference type="Pfam" id="PF00623">
    <property type="entry name" value="RNA_pol_Rpb1_2"/>
    <property type="match status" value="2"/>
</dbReference>
<dbReference type="Pfam" id="PF04983">
    <property type="entry name" value="RNA_pol_Rpb1_3"/>
    <property type="match status" value="1"/>
</dbReference>
<dbReference type="SMART" id="SM00663">
    <property type="entry name" value="RPOLA_N"/>
    <property type="match status" value="1"/>
</dbReference>
<dbReference type="SUPFAM" id="SSF64484">
    <property type="entry name" value="beta and beta-prime subunits of DNA dependent RNA-polymerase"/>
    <property type="match status" value="1"/>
</dbReference>
<accession>B7JWQ8</accession>
<evidence type="ECO:0000255" key="1">
    <source>
        <dbReference type="HAMAP-Rule" id="MF_01323"/>
    </source>
</evidence>
<proteinExistence type="inferred from homology"/>
<gene>
    <name evidence="1" type="primary">rpoC1</name>
    <name type="ordered locus">PCC8801_0616</name>
</gene>